<accession>A8FX70</accession>
<comment type="similarity">
    <text evidence="1">Belongs to the UPF0227 family.</text>
</comment>
<organism>
    <name type="scientific">Shewanella sediminis (strain HAW-EB3)</name>
    <dbReference type="NCBI Taxonomy" id="425104"/>
    <lineage>
        <taxon>Bacteria</taxon>
        <taxon>Pseudomonadati</taxon>
        <taxon>Pseudomonadota</taxon>
        <taxon>Gammaproteobacteria</taxon>
        <taxon>Alteromonadales</taxon>
        <taxon>Shewanellaceae</taxon>
        <taxon>Shewanella</taxon>
    </lineage>
</organism>
<proteinExistence type="inferred from homology"/>
<keyword id="KW-1185">Reference proteome</keyword>
<feature type="chain" id="PRO_1000084417" description="UPF0227 protein Ssed_2836">
    <location>
        <begin position="1"/>
        <end position="179"/>
    </location>
</feature>
<evidence type="ECO:0000255" key="1">
    <source>
        <dbReference type="HAMAP-Rule" id="MF_01047"/>
    </source>
</evidence>
<protein>
    <recommendedName>
        <fullName evidence="1">UPF0227 protein Ssed_2836</fullName>
    </recommendedName>
</protein>
<gene>
    <name type="ordered locus">Ssed_2836</name>
</gene>
<dbReference type="EMBL" id="CP000821">
    <property type="protein sequence ID" value="ABV37443.1"/>
    <property type="molecule type" value="Genomic_DNA"/>
</dbReference>
<dbReference type="RefSeq" id="WP_012143173.1">
    <property type="nucleotide sequence ID" value="NC_009831.1"/>
</dbReference>
<dbReference type="SMR" id="A8FX70"/>
<dbReference type="STRING" id="425104.Ssed_2836"/>
<dbReference type="ESTHER" id="shesh-y2836">
    <property type="family name" value="abh_upf00227"/>
</dbReference>
<dbReference type="KEGG" id="sse:Ssed_2836"/>
<dbReference type="eggNOG" id="COG3150">
    <property type="taxonomic scope" value="Bacteria"/>
</dbReference>
<dbReference type="HOGENOM" id="CLU_128769_0_0_6"/>
<dbReference type="OrthoDB" id="6469735at2"/>
<dbReference type="Proteomes" id="UP000002015">
    <property type="component" value="Chromosome"/>
</dbReference>
<dbReference type="Gene3D" id="3.40.50.1820">
    <property type="entry name" value="alpha/beta hydrolase"/>
    <property type="match status" value="1"/>
</dbReference>
<dbReference type="HAMAP" id="MF_01047">
    <property type="entry name" value="UPF0227"/>
    <property type="match status" value="1"/>
</dbReference>
<dbReference type="InterPro" id="IPR029058">
    <property type="entry name" value="AB_hydrolase_fold"/>
</dbReference>
<dbReference type="InterPro" id="IPR022987">
    <property type="entry name" value="UPF0227"/>
</dbReference>
<dbReference type="InterPro" id="IPR008886">
    <property type="entry name" value="UPF0227/Esterase_YqiA"/>
</dbReference>
<dbReference type="NCBIfam" id="NF003431">
    <property type="entry name" value="PRK04940.1"/>
    <property type="match status" value="1"/>
</dbReference>
<dbReference type="PANTHER" id="PTHR35602">
    <property type="entry name" value="ESTERASE YQIA-RELATED"/>
    <property type="match status" value="1"/>
</dbReference>
<dbReference type="PANTHER" id="PTHR35602:SF2">
    <property type="entry name" value="UPF0227 PROTEIN YCFP"/>
    <property type="match status" value="1"/>
</dbReference>
<dbReference type="Pfam" id="PF05728">
    <property type="entry name" value="UPF0227"/>
    <property type="match status" value="1"/>
</dbReference>
<dbReference type="SUPFAM" id="SSF53474">
    <property type="entry name" value="alpha/beta-Hydrolases"/>
    <property type="match status" value="1"/>
</dbReference>
<sequence length="179" mass="20366">MILYLHGFDATSPGNHEKMRQLQFIDKDVRLVSYSTLHPKHDMQHLLNEVSRQLQQSDDSDPIIIGVGLGAYWAERIGFLNGIRSVLINPNLNPQENMVGRIDRPEEYADIAGKCVSEFRGKNQGKALVILSRKDQVNDNQSVSEQLGGFYQICWDEEQPHKFPVLASHLPQINLFKQA</sequence>
<reference key="1">
    <citation type="submission" date="2007-08" db="EMBL/GenBank/DDBJ databases">
        <title>Complete sequence of Shewanella sediminis HAW-EB3.</title>
        <authorList>
            <consortium name="US DOE Joint Genome Institute"/>
            <person name="Copeland A."/>
            <person name="Lucas S."/>
            <person name="Lapidus A."/>
            <person name="Barry K."/>
            <person name="Glavina del Rio T."/>
            <person name="Dalin E."/>
            <person name="Tice H."/>
            <person name="Pitluck S."/>
            <person name="Chertkov O."/>
            <person name="Brettin T."/>
            <person name="Bruce D."/>
            <person name="Detter J.C."/>
            <person name="Han C."/>
            <person name="Schmutz J."/>
            <person name="Larimer F."/>
            <person name="Land M."/>
            <person name="Hauser L."/>
            <person name="Kyrpides N."/>
            <person name="Kim E."/>
            <person name="Zhao J.-S."/>
            <person name="Richardson P."/>
        </authorList>
    </citation>
    <scope>NUCLEOTIDE SEQUENCE [LARGE SCALE GENOMIC DNA]</scope>
    <source>
        <strain>HAW-EB3</strain>
    </source>
</reference>
<name>Y2836_SHESH</name>